<sequence>MGTRLTTLSNGLKNTLTATKSGLHKAGQSLTQAGSSLKTGAKKIILYIPQNYQYDTEQGNGLQDLVKAAEELGIEVQREERNNIATAQTSLGTIQTAIGLTERGIVLSAPQIDKLLQKTKAGQALGSAESIVQNANKAKTVLSGIQSILGSVLAGMDLDEALQNNSNQHALAKAGLELTNSLIENIANSVKTLDEFGEQISQFGSKLQNIKGLGTLGDKLKNIGGLDKAGLGLDVISGLLSGATAALVLADKNASTAKKVGAGFELANQVVGNITKAVSSYILAQRVAAGLSSTGPVAALIASTVSLAISPLAFAGIADKFNHAKSLESYAERFKKLGYDGDNLLAEYQRGTGTIDASVTAINTALAAIAGGVSAAAAGSVIASPIALLVSGITGVISTILQYSKQAMFEHVANKIHNKIVEWEKNNHGKNYFENGYDARYLANLQDNMKFLLNLNKELQAERVIAITQQQWDNNIGDLAGISRLGEKVLSGKAYVDAFEEGKHIKADKLVQLDSANGIIDVSNSGKAKTQHILFRTPLLTPGTEHRERVQTGKYEYITKLNINRVDSWKITDGAASSTFDLTNVVQRIGIELDNAGNVTKTKETKIIAKLGEGDDNVFVGSGTTEIDGGEGYDRVHYSRGNYGALTIDATKETEQGSYTVNRFVETGKALHEVTSTHTALVGNREEKIEYRHSNNQHHAGYYTKDTLKAVEEIIGTSHNDIFKGSKFNDAFNGGDGVDTIDGNDGNDRLFGGKGDDILDGGNGDDFIDGGKGNDLLHGGKGDDIFVHRKGDGNDIITDSDGNDKLSFSDSNLKDLTFEKVKHNLVITNSKKEKVTIQDWFREADFAKEVPNYKATKDEKIEEIIGQNGERITSKQVDDLIAKGNGKITQDELSKVVDNYELLKHSKNVTNSLDKLISSVSAFTSSNDSRNVLVAPTSMLDQSLSSLQFARAA</sequence>
<dbReference type="EMBL" id="AF314507">
    <property type="protein sequence ID" value="AAG40291.1"/>
    <property type="molecule type" value="Genomic_DNA"/>
</dbReference>
<dbReference type="RefSeq" id="WP_015484526.1">
    <property type="nucleotide sequence ID" value="NZ_JAZDUL010000001.1"/>
</dbReference>
<dbReference type="SMR" id="P0C083"/>
<dbReference type="GO" id="GO:0005576">
    <property type="term" value="C:extracellular region"/>
    <property type="evidence" value="ECO:0007669"/>
    <property type="project" value="UniProtKB-SubCell"/>
</dbReference>
<dbReference type="GO" id="GO:0020002">
    <property type="term" value="C:host cell plasma membrane"/>
    <property type="evidence" value="ECO:0007669"/>
    <property type="project" value="UniProtKB-SubCell"/>
</dbReference>
<dbReference type="GO" id="GO:0016020">
    <property type="term" value="C:membrane"/>
    <property type="evidence" value="ECO:0007669"/>
    <property type="project" value="UniProtKB-KW"/>
</dbReference>
<dbReference type="GO" id="GO:0005509">
    <property type="term" value="F:calcium ion binding"/>
    <property type="evidence" value="ECO:0007669"/>
    <property type="project" value="InterPro"/>
</dbReference>
<dbReference type="GO" id="GO:0015267">
    <property type="term" value="F:channel activity"/>
    <property type="evidence" value="ECO:0007669"/>
    <property type="project" value="InterPro"/>
</dbReference>
<dbReference type="GO" id="GO:0090729">
    <property type="term" value="F:toxin activity"/>
    <property type="evidence" value="ECO:0007669"/>
    <property type="project" value="UniProtKB-KW"/>
</dbReference>
<dbReference type="GO" id="GO:0031640">
    <property type="term" value="P:killing of cells of another organism"/>
    <property type="evidence" value="ECO:0007669"/>
    <property type="project" value="UniProtKB-KW"/>
</dbReference>
<dbReference type="FunFam" id="2.150.10.10:FF:000002">
    <property type="entry name" value="Leukotoxin"/>
    <property type="match status" value="1"/>
</dbReference>
<dbReference type="Gene3D" id="2.150.10.10">
    <property type="entry name" value="Serralysin-like metalloprotease, C-terminal"/>
    <property type="match status" value="1"/>
</dbReference>
<dbReference type="InterPro" id="IPR018511">
    <property type="entry name" value="Hemolysin-typ_Ca-bd_CS"/>
</dbReference>
<dbReference type="InterPro" id="IPR001343">
    <property type="entry name" value="Hemolysn_Ca-bd"/>
</dbReference>
<dbReference type="InterPro" id="IPR013550">
    <property type="entry name" value="RTX_C"/>
</dbReference>
<dbReference type="InterPro" id="IPR018504">
    <property type="entry name" value="RTX_pore_form"/>
</dbReference>
<dbReference type="InterPro" id="IPR050557">
    <property type="entry name" value="RTX_toxin/Mannuronan_C5-epim"/>
</dbReference>
<dbReference type="InterPro" id="IPR003995">
    <property type="entry name" value="RTX_toxin_determinant-A"/>
</dbReference>
<dbReference type="InterPro" id="IPR011049">
    <property type="entry name" value="Serralysin-like_metalloprot_C"/>
</dbReference>
<dbReference type="NCBIfam" id="NF033943">
    <property type="entry name" value="RTX_toxin"/>
    <property type="match status" value="1"/>
</dbReference>
<dbReference type="PANTHER" id="PTHR38340">
    <property type="entry name" value="S-LAYER PROTEIN"/>
    <property type="match status" value="1"/>
</dbReference>
<dbReference type="PANTHER" id="PTHR38340:SF1">
    <property type="entry name" value="S-LAYER PROTEIN"/>
    <property type="match status" value="1"/>
</dbReference>
<dbReference type="Pfam" id="PF00353">
    <property type="entry name" value="HemolysinCabind"/>
    <property type="match status" value="3"/>
</dbReference>
<dbReference type="Pfam" id="PF02382">
    <property type="entry name" value="RTX"/>
    <property type="match status" value="1"/>
</dbReference>
<dbReference type="Pfam" id="PF08339">
    <property type="entry name" value="RTX_C"/>
    <property type="match status" value="1"/>
</dbReference>
<dbReference type="PRINTS" id="PR00313">
    <property type="entry name" value="CABNDNGRPT"/>
</dbReference>
<dbReference type="PRINTS" id="PR01488">
    <property type="entry name" value="RTXTOXINA"/>
</dbReference>
<dbReference type="SUPFAM" id="SSF51120">
    <property type="entry name" value="beta-Roll"/>
    <property type="match status" value="1"/>
</dbReference>
<dbReference type="PROSITE" id="PS00330">
    <property type="entry name" value="HEMOLYSIN_CALCIUM"/>
    <property type="match status" value="4"/>
</dbReference>
<gene>
    <name type="primary">lktA</name>
</gene>
<feature type="chain" id="PRO_0000196226" description="Leukotoxin">
    <location>
        <begin position="1"/>
        <end position="953"/>
    </location>
</feature>
<feature type="transmembrane region" description="Helical" evidence="2">
    <location>
        <begin position="229"/>
        <end position="249"/>
    </location>
</feature>
<feature type="transmembrane region" description="Helical" evidence="2">
    <location>
        <begin position="297"/>
        <end position="317"/>
    </location>
</feature>
<feature type="transmembrane region" description="Helical" evidence="2">
    <location>
        <begin position="359"/>
        <end position="379"/>
    </location>
</feature>
<feature type="transmembrane region" description="Helical" evidence="2">
    <location>
        <begin position="381"/>
        <end position="401"/>
    </location>
</feature>
<feature type="repeat" description="Hemolysin-type calcium-binding 1">
    <location>
        <begin position="715"/>
        <end position="732"/>
    </location>
</feature>
<feature type="repeat" description="Hemolysin-type calcium-binding 2">
    <location>
        <begin position="733"/>
        <end position="750"/>
    </location>
</feature>
<feature type="repeat" description="Hemolysin-type calcium-binding 3">
    <location>
        <begin position="751"/>
        <end position="768"/>
    </location>
</feature>
<feature type="repeat" description="Hemolysin-type calcium-binding 4">
    <location>
        <begin position="769"/>
        <end position="786"/>
    </location>
</feature>
<feature type="repeat" description="Hemolysin-type calcium-binding 5">
    <location>
        <begin position="789"/>
        <end position="806"/>
    </location>
</feature>
<comment type="function">
    <text evidence="1">Pasteurella leukotoxins are exotoxins that attack host leukocytes and especially polymorphonuclear cells, by causing cell rupture. The leukotoxin binds to the host LFA-1 integrin and induces a signaling cascade leading to many biological effects, including tyrosine phosphorylation of the CD18 tail, elevation of the intracellular Ca(2+) and lysis of the host cell (By similarity). This leukotoxin is a major contributor to the pathogenesis of lung injury in ovine pneumonic pasteurellosis. It also has weak hemolytic activity.</text>
</comment>
<comment type="subcellular location">
    <subcellularLocation>
        <location evidence="1">Secreted</location>
    </subcellularLocation>
    <subcellularLocation>
        <location evidence="1">Host cell membrane</location>
        <topology evidence="1">Multi-pass membrane protein</topology>
    </subcellularLocation>
</comment>
<comment type="domain">
    <text evidence="1">The transmembrane domains are believed to be involved in pore formation in target cells.</text>
</comment>
<comment type="domain">
    <text evidence="1">The Gly-rich region is probably involved in calcium binding, which is required for target cell-binding and cytolytic activity.</text>
</comment>
<comment type="domain">
    <text evidence="1">The C-terminal domain contains an export signal that is recognized by the ABC transporter complex LktBD.</text>
</comment>
<comment type="PTM">
    <text evidence="1">Acylated by LktC. The toxin only becomes active when modified (By similarity).</text>
</comment>
<comment type="miscellaneous">
    <text>The lktCABD operon has a complex mosaic structure that has been derived by extensive inter- and intraspecies horizontal DNA transfer and intragenic recombination events.</text>
</comment>
<comment type="similarity">
    <text evidence="3">Belongs to the RTX prokaryotic toxin (TC 1.C.11) family.</text>
</comment>
<proteinExistence type="inferred from homology"/>
<evidence type="ECO:0000250" key="1"/>
<evidence type="ECO:0000255" key="2"/>
<evidence type="ECO:0000305" key="3"/>
<reference key="1">
    <citation type="journal article" date="2001" name="J. Bacteriol.">
        <title>Sequence diversity and molecular evolution of the leukotoxin (lktA) gene in bovine and ovine strains of Mannheimia (Pasteurella) haemolytica.</title>
        <authorList>
            <person name="Davies R.L."/>
            <person name="Whittam T.S."/>
            <person name="Selander R.K."/>
        </authorList>
    </citation>
    <scope>NUCLEOTIDE SEQUENCE [GENOMIC DNA]</scope>
    <source>
        <strain>Serotype A6 / PH284</strain>
    </source>
</reference>
<name>LKTA6_MANHA</name>
<protein>
    <recommendedName>
        <fullName>Leukotoxin</fullName>
        <shortName>Lkt</shortName>
    </recommendedName>
</protein>
<accession>P0C083</accession>
<accession>Q9ETG5</accession>
<organism>
    <name type="scientific">Mannheimia haemolytica</name>
    <name type="common">Pasteurella haemolytica</name>
    <dbReference type="NCBI Taxonomy" id="75985"/>
    <lineage>
        <taxon>Bacteria</taxon>
        <taxon>Pseudomonadati</taxon>
        <taxon>Pseudomonadota</taxon>
        <taxon>Gammaproteobacteria</taxon>
        <taxon>Pasteurellales</taxon>
        <taxon>Pasteurellaceae</taxon>
        <taxon>Mannheimia</taxon>
    </lineage>
</organism>
<keyword id="KW-0106">Calcium</keyword>
<keyword id="KW-0204">Cytolysis</keyword>
<keyword id="KW-0354">Hemolysis</keyword>
<keyword id="KW-1032">Host cell membrane</keyword>
<keyword id="KW-1043">Host membrane</keyword>
<keyword id="KW-0449">Lipoprotein</keyword>
<keyword id="KW-0472">Membrane</keyword>
<keyword id="KW-0677">Repeat</keyword>
<keyword id="KW-0964">Secreted</keyword>
<keyword id="KW-0800">Toxin</keyword>
<keyword id="KW-0812">Transmembrane</keyword>
<keyword id="KW-1133">Transmembrane helix</keyword>
<keyword id="KW-0843">Virulence</keyword>